<proteinExistence type="inferred from homology"/>
<protein>
    <recommendedName>
        <fullName evidence="1">Cytidylate kinase</fullName>
        <shortName evidence="1">CK</shortName>
        <ecNumber evidence="1">2.7.4.25</ecNumber>
    </recommendedName>
    <alternativeName>
        <fullName evidence="1">Cytidine monophosphate kinase</fullName>
        <shortName evidence="1">CMP kinase</shortName>
    </alternativeName>
</protein>
<name>KCY_METSB</name>
<organism>
    <name type="scientific">Methylocella silvestris (strain DSM 15510 / CIP 108128 / LMG 27833 / NCIMB 13906 / BL2)</name>
    <dbReference type="NCBI Taxonomy" id="395965"/>
    <lineage>
        <taxon>Bacteria</taxon>
        <taxon>Pseudomonadati</taxon>
        <taxon>Pseudomonadota</taxon>
        <taxon>Alphaproteobacteria</taxon>
        <taxon>Hyphomicrobiales</taxon>
        <taxon>Beijerinckiaceae</taxon>
        <taxon>Methylocella</taxon>
    </lineage>
</organism>
<gene>
    <name evidence="1" type="primary">cmk</name>
    <name type="ordered locus">Msil_0614</name>
</gene>
<evidence type="ECO:0000255" key="1">
    <source>
        <dbReference type="HAMAP-Rule" id="MF_00238"/>
    </source>
</evidence>
<dbReference type="EC" id="2.7.4.25" evidence="1"/>
<dbReference type="EMBL" id="CP001280">
    <property type="protein sequence ID" value="ACK49586.1"/>
    <property type="molecule type" value="Genomic_DNA"/>
</dbReference>
<dbReference type="RefSeq" id="WP_012589656.1">
    <property type="nucleotide sequence ID" value="NC_011666.1"/>
</dbReference>
<dbReference type="SMR" id="B8EN73"/>
<dbReference type="STRING" id="395965.Msil_0614"/>
<dbReference type="KEGG" id="msl:Msil_0614"/>
<dbReference type="eggNOG" id="COG0283">
    <property type="taxonomic scope" value="Bacteria"/>
</dbReference>
<dbReference type="HOGENOM" id="CLU_079959_0_1_5"/>
<dbReference type="OrthoDB" id="9807434at2"/>
<dbReference type="Proteomes" id="UP000002257">
    <property type="component" value="Chromosome"/>
</dbReference>
<dbReference type="GO" id="GO:0005737">
    <property type="term" value="C:cytoplasm"/>
    <property type="evidence" value="ECO:0007669"/>
    <property type="project" value="UniProtKB-SubCell"/>
</dbReference>
<dbReference type="GO" id="GO:0005524">
    <property type="term" value="F:ATP binding"/>
    <property type="evidence" value="ECO:0007669"/>
    <property type="project" value="UniProtKB-UniRule"/>
</dbReference>
<dbReference type="GO" id="GO:0036430">
    <property type="term" value="F:CMP kinase activity"/>
    <property type="evidence" value="ECO:0007669"/>
    <property type="project" value="RHEA"/>
</dbReference>
<dbReference type="GO" id="GO:0036431">
    <property type="term" value="F:dCMP kinase activity"/>
    <property type="evidence" value="ECO:0007669"/>
    <property type="project" value="RHEA"/>
</dbReference>
<dbReference type="GO" id="GO:0006220">
    <property type="term" value="P:pyrimidine nucleotide metabolic process"/>
    <property type="evidence" value="ECO:0007669"/>
    <property type="project" value="UniProtKB-UniRule"/>
</dbReference>
<dbReference type="CDD" id="cd02020">
    <property type="entry name" value="CMPK"/>
    <property type="match status" value="1"/>
</dbReference>
<dbReference type="Gene3D" id="3.40.50.300">
    <property type="entry name" value="P-loop containing nucleotide triphosphate hydrolases"/>
    <property type="match status" value="1"/>
</dbReference>
<dbReference type="HAMAP" id="MF_00238">
    <property type="entry name" value="Cytidyl_kinase_type1"/>
    <property type="match status" value="1"/>
</dbReference>
<dbReference type="InterPro" id="IPR003136">
    <property type="entry name" value="Cytidylate_kin"/>
</dbReference>
<dbReference type="InterPro" id="IPR011994">
    <property type="entry name" value="Cytidylate_kinase_dom"/>
</dbReference>
<dbReference type="InterPro" id="IPR027417">
    <property type="entry name" value="P-loop_NTPase"/>
</dbReference>
<dbReference type="NCBIfam" id="TIGR00017">
    <property type="entry name" value="cmk"/>
    <property type="match status" value="1"/>
</dbReference>
<dbReference type="Pfam" id="PF02224">
    <property type="entry name" value="Cytidylate_kin"/>
    <property type="match status" value="1"/>
</dbReference>
<dbReference type="SUPFAM" id="SSF52540">
    <property type="entry name" value="P-loop containing nucleoside triphosphate hydrolases"/>
    <property type="match status" value="1"/>
</dbReference>
<sequence length="216" mass="22899">MIIAIDGPAASGKGTLARRLAAHFGLPHLDTGLLYRATARALLDHGHDLSDREAAISAARSLALTDFDEAGLRSRDMAEAASVVAAIPEVRAALVDMQRRFAGRPGGALLDGRDIGTVICPDADCKIFVTASDEARATRRALELRGRGEKVDYAAVLEDIRKRDLRDSSRAAAPLKPADDAVVLDTTKLDVEAAFKAALVIVESAHDSLRAGHPAF</sequence>
<comment type="catalytic activity">
    <reaction evidence="1">
        <text>CMP + ATP = CDP + ADP</text>
        <dbReference type="Rhea" id="RHEA:11600"/>
        <dbReference type="ChEBI" id="CHEBI:30616"/>
        <dbReference type="ChEBI" id="CHEBI:58069"/>
        <dbReference type="ChEBI" id="CHEBI:60377"/>
        <dbReference type="ChEBI" id="CHEBI:456216"/>
        <dbReference type="EC" id="2.7.4.25"/>
    </reaction>
</comment>
<comment type="catalytic activity">
    <reaction evidence="1">
        <text>dCMP + ATP = dCDP + ADP</text>
        <dbReference type="Rhea" id="RHEA:25094"/>
        <dbReference type="ChEBI" id="CHEBI:30616"/>
        <dbReference type="ChEBI" id="CHEBI:57566"/>
        <dbReference type="ChEBI" id="CHEBI:58593"/>
        <dbReference type="ChEBI" id="CHEBI:456216"/>
        <dbReference type="EC" id="2.7.4.25"/>
    </reaction>
</comment>
<comment type="subcellular location">
    <subcellularLocation>
        <location evidence="1">Cytoplasm</location>
    </subcellularLocation>
</comment>
<comment type="similarity">
    <text evidence="1">Belongs to the cytidylate kinase family. Type 1 subfamily.</text>
</comment>
<keyword id="KW-0067">ATP-binding</keyword>
<keyword id="KW-0963">Cytoplasm</keyword>
<keyword id="KW-0418">Kinase</keyword>
<keyword id="KW-0547">Nucleotide-binding</keyword>
<keyword id="KW-1185">Reference proteome</keyword>
<keyword id="KW-0808">Transferase</keyword>
<accession>B8EN73</accession>
<reference key="1">
    <citation type="journal article" date="2010" name="J. Bacteriol.">
        <title>Complete genome sequence of the aerobic facultative methanotroph Methylocella silvestris BL2.</title>
        <authorList>
            <person name="Chen Y."/>
            <person name="Crombie A."/>
            <person name="Rahman M.T."/>
            <person name="Dedysh S.N."/>
            <person name="Liesack W."/>
            <person name="Stott M.B."/>
            <person name="Alam M."/>
            <person name="Theisen A.R."/>
            <person name="Murrell J.C."/>
            <person name="Dunfield P.F."/>
        </authorList>
    </citation>
    <scope>NUCLEOTIDE SEQUENCE [LARGE SCALE GENOMIC DNA]</scope>
    <source>
        <strain>DSM 15510 / CIP 108128 / LMG 27833 / NCIMB 13906 / BL2</strain>
    </source>
</reference>
<feature type="chain" id="PRO_1000125291" description="Cytidylate kinase">
    <location>
        <begin position="1"/>
        <end position="216"/>
    </location>
</feature>
<feature type="binding site" evidence="1">
    <location>
        <begin position="7"/>
        <end position="15"/>
    </location>
    <ligand>
        <name>ATP</name>
        <dbReference type="ChEBI" id="CHEBI:30616"/>
    </ligand>
</feature>